<accession>Q5RKJ0</accession>
<proteinExistence type="evidence at transcript level"/>
<gene>
    <name type="primary">Fam110c</name>
</gene>
<evidence type="ECO:0000250" key="1">
    <source>
        <dbReference type="UniProtKB" id="Q1W6H9"/>
    </source>
</evidence>
<evidence type="ECO:0000256" key="2">
    <source>
        <dbReference type="SAM" id="MobiDB-lite"/>
    </source>
</evidence>
<evidence type="ECO:0000305" key="3"/>
<dbReference type="EMBL" id="BC085778">
    <property type="protein sequence ID" value="AAH85778.1"/>
    <property type="molecule type" value="mRNA"/>
</dbReference>
<dbReference type="RefSeq" id="NP_001020222.1">
    <property type="nucleotide sequence ID" value="NM_001025051.1"/>
</dbReference>
<dbReference type="FunCoup" id="Q5RKJ0">
    <property type="interactions" value="211"/>
</dbReference>
<dbReference type="STRING" id="10116.ENSRNOP00000007466"/>
<dbReference type="PhosphoSitePlus" id="Q5RKJ0"/>
<dbReference type="PaxDb" id="10116-ENSRNOP00000007466"/>
<dbReference type="GeneID" id="500638"/>
<dbReference type="KEGG" id="rno:500638"/>
<dbReference type="UCSC" id="RGD:1564713">
    <property type="organism name" value="rat"/>
</dbReference>
<dbReference type="AGR" id="RGD:1564713"/>
<dbReference type="CTD" id="642273"/>
<dbReference type="RGD" id="1564713">
    <property type="gene designation" value="Fam110c"/>
</dbReference>
<dbReference type="VEuPathDB" id="HostDB:ENSRNOG00000005660"/>
<dbReference type="eggNOG" id="ENOG502S0DB">
    <property type="taxonomic scope" value="Eukaryota"/>
</dbReference>
<dbReference type="HOGENOM" id="CLU_050540_0_0_1"/>
<dbReference type="InParanoid" id="Q5RKJ0"/>
<dbReference type="OrthoDB" id="86342at9989"/>
<dbReference type="PhylomeDB" id="Q5RKJ0"/>
<dbReference type="TreeFam" id="TF330964"/>
<dbReference type="PRO" id="PR:Q5RKJ0"/>
<dbReference type="Proteomes" id="UP000002494">
    <property type="component" value="Chromosome 6"/>
</dbReference>
<dbReference type="Bgee" id="ENSRNOG00000005660">
    <property type="expression patterns" value="Expressed in duodenum and 12 other cell types or tissues"/>
</dbReference>
<dbReference type="GO" id="GO:0005938">
    <property type="term" value="C:cell cortex"/>
    <property type="evidence" value="ECO:0000250"/>
    <property type="project" value="UniProtKB"/>
</dbReference>
<dbReference type="GO" id="GO:0005813">
    <property type="term" value="C:centrosome"/>
    <property type="evidence" value="ECO:0007669"/>
    <property type="project" value="UniProtKB-SubCell"/>
</dbReference>
<dbReference type="GO" id="GO:0005874">
    <property type="term" value="C:microtubule"/>
    <property type="evidence" value="ECO:0007669"/>
    <property type="project" value="UniProtKB-KW"/>
</dbReference>
<dbReference type="GO" id="GO:0005634">
    <property type="term" value="C:nucleus"/>
    <property type="evidence" value="ECO:0007669"/>
    <property type="project" value="UniProtKB-SubCell"/>
</dbReference>
<dbReference type="GO" id="GO:0000922">
    <property type="term" value="C:spindle pole"/>
    <property type="evidence" value="ECO:0007669"/>
    <property type="project" value="UniProtKB-SubCell"/>
</dbReference>
<dbReference type="GO" id="GO:0043014">
    <property type="term" value="F:alpha-tubulin binding"/>
    <property type="evidence" value="ECO:0000250"/>
    <property type="project" value="UniProtKB"/>
</dbReference>
<dbReference type="GO" id="GO:0030335">
    <property type="term" value="P:positive regulation of cell migration"/>
    <property type="evidence" value="ECO:0000250"/>
    <property type="project" value="UniProtKB"/>
</dbReference>
<dbReference type="GO" id="GO:0051897">
    <property type="term" value="P:positive regulation of phosphatidylinositol 3-kinase/protein kinase B signal transduction"/>
    <property type="evidence" value="ECO:0000250"/>
    <property type="project" value="UniProtKB"/>
</dbReference>
<dbReference type="GO" id="GO:0060491">
    <property type="term" value="P:regulation of cell projection assembly"/>
    <property type="evidence" value="ECO:0000250"/>
    <property type="project" value="UniProtKB"/>
</dbReference>
<dbReference type="InterPro" id="IPR025740">
    <property type="entry name" value="FAM110"/>
</dbReference>
<dbReference type="InterPro" id="IPR025741">
    <property type="entry name" value="FAM110_C"/>
</dbReference>
<dbReference type="PANTHER" id="PTHR14758">
    <property type="entry name" value="AGAP005440-PA"/>
    <property type="match status" value="1"/>
</dbReference>
<dbReference type="PANTHER" id="PTHR14758:SF5">
    <property type="entry name" value="PROTEIN FAM110C"/>
    <property type="match status" value="1"/>
</dbReference>
<dbReference type="Pfam" id="PF14160">
    <property type="entry name" value="FAM110_C"/>
    <property type="match status" value="1"/>
</dbReference>
<keyword id="KW-0963">Cytoplasm</keyword>
<keyword id="KW-0206">Cytoskeleton</keyword>
<keyword id="KW-0493">Microtubule</keyword>
<keyword id="KW-0539">Nucleus</keyword>
<keyword id="KW-0597">Phosphoprotein</keyword>
<keyword id="KW-1185">Reference proteome</keyword>
<protein>
    <recommendedName>
        <fullName>Protein FAM110C</fullName>
    </recommendedName>
</protein>
<organism>
    <name type="scientific">Rattus norvegicus</name>
    <name type="common">Rat</name>
    <dbReference type="NCBI Taxonomy" id="10116"/>
    <lineage>
        <taxon>Eukaryota</taxon>
        <taxon>Metazoa</taxon>
        <taxon>Chordata</taxon>
        <taxon>Craniata</taxon>
        <taxon>Vertebrata</taxon>
        <taxon>Euteleostomi</taxon>
        <taxon>Mammalia</taxon>
        <taxon>Eutheria</taxon>
        <taxon>Euarchontoglires</taxon>
        <taxon>Glires</taxon>
        <taxon>Rodentia</taxon>
        <taxon>Myomorpha</taxon>
        <taxon>Muroidea</taxon>
        <taxon>Muridae</taxon>
        <taxon>Murinae</taxon>
        <taxon>Rattus</taxon>
    </lineage>
</organism>
<reference key="1">
    <citation type="journal article" date="2004" name="Genome Res.">
        <title>The status, quality, and expansion of the NIH full-length cDNA project: the Mammalian Gene Collection (MGC).</title>
        <authorList>
            <consortium name="The MGC Project Team"/>
        </authorList>
    </citation>
    <scope>NUCLEOTIDE SEQUENCE [LARGE SCALE MRNA]</scope>
    <source>
        <tissue>Kidney</tissue>
    </source>
</reference>
<name>F110C_RAT</name>
<comment type="function">
    <text evidence="1">May play a role in microtubule organization. May play a role in cell spreading and cell migration of epithelial cells; the function may involve the AKT1 signaling pathway.</text>
</comment>
<comment type="subunit">
    <text evidence="1">Interacts with AKT1; the interaction is transient and follows AKT1 activation. Interacts with PPP2CA and alpha-tubulin.</text>
</comment>
<comment type="subcellular location">
    <subcellularLocation>
        <location evidence="1">Cytoplasm</location>
        <location evidence="1">Cytoskeleton</location>
    </subcellularLocation>
    <subcellularLocation>
        <location evidence="1">Cytoplasm</location>
        <location evidence="1">Cytoskeleton</location>
        <location evidence="1">Microtubule organizing center</location>
        <location evidence="1">Centrosome</location>
    </subcellularLocation>
    <subcellularLocation>
        <location evidence="1">Cytoplasm</location>
        <location evidence="1">Cytoskeleton</location>
        <location evidence="1">Spindle pole</location>
    </subcellularLocation>
    <subcellularLocation>
        <location evidence="1">Nucleus</location>
    </subcellularLocation>
    <text evidence="1">Colocalizes with microtubules during interphase. Detected at the mitotic spindle poles. Colocalizes with AKT1 at the cell cortex.</text>
</comment>
<comment type="similarity">
    <text evidence="3">Belongs to the FAM110 family.</text>
</comment>
<sequence length="326" mass="35578">MRALPTLDSLARTRPSLGDSRAAEGTLTRQPANKSAVERLAADRAKYVRSTLGSSRGPVSENRVPEAPGVQHRNPIPSTLAPAPVARRAVARKPLRPDSLVIYRQKCEFVRGSDADSSRVGLMKKFFQGSGKDKMSVTPETTRVADEYKTKETEATWTKASQAAAAKPASMLPPPAPVVAMESPALPFEVAPRVPVRRSGVELRASRSKGLQRSQSDLSSRYSTARAESDTFFQYCGLDPEVVESLGRENFSAASDCVTPKMRSVSMATSDSSFSRHSEDGLQEEELLEQVPSTTSVVERNARIIKWLFTCKKAKETPSQKLQEPA</sequence>
<feature type="chain" id="PRO_0000293463" description="Protein FAM110C">
    <location>
        <begin position="1"/>
        <end position="326"/>
    </location>
</feature>
<feature type="region of interest" description="Disordered" evidence="2">
    <location>
        <begin position="1"/>
        <end position="37"/>
    </location>
</feature>
<feature type="region of interest" description="Disordered" evidence="2">
    <location>
        <begin position="51"/>
        <end position="80"/>
    </location>
</feature>
<feature type="region of interest" description="Disordered" evidence="2">
    <location>
        <begin position="201"/>
        <end position="221"/>
    </location>
</feature>
<feature type="compositionally biased region" description="Polar residues" evidence="2">
    <location>
        <begin position="209"/>
        <end position="221"/>
    </location>
</feature>
<feature type="modified residue" description="Phosphoserine" evidence="1">
    <location>
        <position position="255"/>
    </location>
</feature>